<accession>A0A7M2BU98</accession>
<dbReference type="EMBL" id="MT722078">
    <property type="protein sequence ID" value="QOT13800.1"/>
    <property type="molecule type" value="mRNA"/>
</dbReference>
<dbReference type="SMR" id="A0A7M2BU98"/>
<dbReference type="GO" id="GO:0005576">
    <property type="term" value="C:extracellular region"/>
    <property type="evidence" value="ECO:0007669"/>
    <property type="project" value="UniProtKB-SubCell"/>
</dbReference>
<dbReference type="InterPro" id="IPR008701">
    <property type="entry name" value="NPP1"/>
</dbReference>
<dbReference type="PANTHER" id="PTHR33657">
    <property type="entry name" value="DOMAIN PROTEIN, PUTATIVE (AFU_ORTHOLOGUE AFUA_5G00600)-RELATED"/>
    <property type="match status" value="1"/>
</dbReference>
<dbReference type="PANTHER" id="PTHR33657:SF8">
    <property type="entry name" value="DOMAIN PROTEIN, PUTATIVE (AFU_ORTHOLOGUE AFUA_5G00600)-RELATED"/>
    <property type="match status" value="1"/>
</dbReference>
<dbReference type="Pfam" id="PF05630">
    <property type="entry name" value="NPP1"/>
    <property type="match status" value="1"/>
</dbReference>
<dbReference type="PIRSF" id="PIRSF029958">
    <property type="entry name" value="Necrosis-inducing_protein"/>
    <property type="match status" value="1"/>
</dbReference>
<protein>
    <recommendedName>
        <fullName evidence="4">NLP effector protein 7</fullName>
    </recommendedName>
    <alternativeName>
        <fullName evidence="4">Nep1-like protein 7</fullName>
    </alternativeName>
</protein>
<name>NLP7_PLAVT</name>
<feature type="signal peptide" evidence="1">
    <location>
        <begin position="1"/>
        <end position="19"/>
    </location>
</feature>
<feature type="chain" id="PRO_5029566929" description="NLP effector protein 7">
    <location>
        <begin position="20"/>
        <end position="241"/>
    </location>
</feature>
<feature type="short sequence motif" description="Conserved undecapeptide motif" evidence="6 7">
    <location>
        <begin position="105"/>
        <end position="115"/>
    </location>
</feature>
<feature type="short sequence motif" description="Conserved heptapeptide motif" evidence="6 7">
    <location>
        <begin position="125"/>
        <end position="131"/>
    </location>
</feature>
<feature type="glycosylation site" description="N-linked (GlcNAc...) asparagine" evidence="2">
    <location>
        <position position="144"/>
    </location>
</feature>
<comment type="function">
    <text evidence="3">Secreted effector that acts as a pathogen-associated molecular pattern (PAMP) recognized by the plant immune system (PubMed:35152834). Induces necrosis in Nicotiana benthamiana leaves and can induce Phytophthora capsici resistance in Nicotiana benthamiana (PubMed:35152834). Also significantly improves disease resistance of Arabidopsis thaliana to Hyaloperonospora arabidopsidis (PubMed:35152834). causes an inhibition of plant growth which is typically associated with enhanced immunity when over-expressed in Arabidopsis (PubMed:35152834).</text>
</comment>
<comment type="subcellular location">
    <subcellularLocation>
        <location evidence="6">Secreted</location>
    </subcellularLocation>
</comment>
<comment type="induction">
    <text evidence="3">Expressed strongly at the early stages of host infection (up to 24 hours after infection) but subsided quickly afterward.</text>
</comment>
<comment type="domain">
    <text evidence="6 7">The structure of NLP effectors is remarkably conserved with a high level of conservation of a central region containing the conserved undecapeptide motif AIMYAWYFPKD and heptapeptide motif GHRHDWE.</text>
</comment>
<comment type="similarity">
    <text evidence="5">Belongs to the Necrosis inducing protein (NPP1) family.</text>
</comment>
<proteinExistence type="evidence at transcript level"/>
<sequence length="241" mass="27173">MHLCALLIAAAGVLASVRANYVEIDAYTVKPFAQQKPSTDSERSALKYKPHLHVQAGCHPYPAVQRDGSLSAGFEWKEKNSQPCGRSPLGSQVYSRSNWYKEKWAIMYAWYFPKASNHIGRGVSGSRHYWLYAIVWTDDANPTNSSLLGVTLSAGIGLSKHTKLKSKHVIDGTTLKLKSHLSFWGRRLALKFTNKLGETQDLITWEQLPPEAQTALTLDYKLNTPLQDFRFEDLLKEAYPF</sequence>
<reference key="1">
    <citation type="journal article" date="2020" name="Front. Plant Sci.">
        <title>Identification and characterization of Nep1-like proteins from the grapevine downy mildew pathogen Plasmopara viticola.</title>
        <authorList>
            <person name="Schumacher S."/>
            <person name="Grosser K."/>
            <person name="Voegele R.T."/>
            <person name="Kassemeyer H.H."/>
            <person name="Fuchs R."/>
        </authorList>
    </citation>
    <scope>NUCLEOTIDE SEQUENCE [MRNA]</scope>
    <scope>IDENTIFICATION</scope>
    <scope>DOMAIN</scope>
    <source>
        <strain>Pv1446</strain>
    </source>
</reference>
<reference key="2">
    <citation type="journal article" date="2022" name="Plant Signal. Behav.">
        <title>Functional analysis of the Nep1-like proteins from Plasmopara viticola.</title>
        <authorList>
            <person name="Xiang J."/>
            <person name="Cheng J."/>
            <person name="Wei L."/>
            <person name="Li M."/>
            <person name="Wu J."/>
        </authorList>
    </citation>
    <scope>FUNCTION</scope>
    <scope>DOMAIN</scope>
    <scope>INDUCTION</scope>
</reference>
<organism>
    <name type="scientific">Plasmopara viticola</name>
    <name type="common">Downy mildew of grapevine</name>
    <name type="synonym">Botrytis viticola</name>
    <dbReference type="NCBI Taxonomy" id="143451"/>
    <lineage>
        <taxon>Eukaryota</taxon>
        <taxon>Sar</taxon>
        <taxon>Stramenopiles</taxon>
        <taxon>Oomycota</taxon>
        <taxon>Peronosporales</taxon>
        <taxon>Peronosporaceae</taxon>
        <taxon>Plasmopara</taxon>
    </lineage>
</organism>
<keyword id="KW-0325">Glycoprotein</keyword>
<keyword id="KW-0964">Secreted</keyword>
<keyword id="KW-0732">Signal</keyword>
<keyword id="KW-0843">Virulence</keyword>
<evidence type="ECO:0000255" key="1"/>
<evidence type="ECO:0000255" key="2">
    <source>
        <dbReference type="PROSITE-ProRule" id="PRU00498"/>
    </source>
</evidence>
<evidence type="ECO:0000269" key="3">
    <source>
    </source>
</evidence>
<evidence type="ECO:0000303" key="4">
    <source>
    </source>
</evidence>
<evidence type="ECO:0000305" key="5"/>
<evidence type="ECO:0000305" key="6">
    <source>
    </source>
</evidence>
<evidence type="ECO:0000305" key="7">
    <source>
    </source>
</evidence>
<gene>
    <name evidence="4" type="primary">NLP7</name>
</gene>